<evidence type="ECO:0000250" key="1"/>
<evidence type="ECO:0000255" key="2"/>
<evidence type="ECO:0000255" key="3">
    <source>
        <dbReference type="PROSITE-ProRule" id="PRU01079"/>
    </source>
</evidence>
<evidence type="ECO:0000305" key="4"/>
<protein>
    <recommendedName>
        <fullName>Replication protein 1a</fullName>
    </recommendedName>
    <domain>
        <recommendedName>
            <fullName>ATP-dependent helicase</fullName>
            <ecNumber>3.6.4.-</ecNumber>
        </recommendedName>
    </domain>
    <domain>
        <recommendedName>
            <fullName>Methyltransferase</fullName>
            <ecNumber>2.1.1.-</ecNumber>
        </recommendedName>
    </domain>
</protein>
<name>1A_CMVQ</name>
<comment type="function">
    <text evidence="1">Involved in the virus replication. Contains a helicase domain and a methyltransferase domain. The methyltransferase domain is probably involved in viral RNA capping. Involved in the formation of ER membrane spherular invaginations in which RNA replication complexes form (By similarity).</text>
</comment>
<comment type="subunit">
    <text evidence="1">Interacts with RNA-directed RNA polymerase 2a.</text>
</comment>
<comment type="subcellular location">
    <subcellularLocation>
        <location evidence="1">Host endoplasmic reticulum membrane</location>
        <topology evidence="1">Peripheral membrane protein</topology>
    </subcellularLocation>
</comment>
<comment type="similarity">
    <text evidence="4">Belongs to the bromoviridae replication protein 1a family.</text>
</comment>
<dbReference type="EC" id="3.6.4.-"/>
<dbReference type="EC" id="2.1.1.-"/>
<dbReference type="EMBL" id="X02733">
    <property type="protein sequence ID" value="CAA26515.1"/>
    <property type="molecule type" value="Genomic_RNA"/>
</dbReference>
<dbReference type="PIR" id="A25480">
    <property type="entry name" value="P1BVCV"/>
</dbReference>
<dbReference type="SMR" id="P06011"/>
<dbReference type="Proteomes" id="UP000008454">
    <property type="component" value="Genome"/>
</dbReference>
<dbReference type="GO" id="GO:0044167">
    <property type="term" value="C:host cell endoplasmic reticulum membrane"/>
    <property type="evidence" value="ECO:0007669"/>
    <property type="project" value="UniProtKB-SubCell"/>
</dbReference>
<dbReference type="GO" id="GO:0016020">
    <property type="term" value="C:membrane"/>
    <property type="evidence" value="ECO:0007669"/>
    <property type="project" value="UniProtKB-KW"/>
</dbReference>
<dbReference type="GO" id="GO:0005524">
    <property type="term" value="F:ATP binding"/>
    <property type="evidence" value="ECO:0007669"/>
    <property type="project" value="UniProtKB-KW"/>
</dbReference>
<dbReference type="GO" id="GO:0004386">
    <property type="term" value="F:helicase activity"/>
    <property type="evidence" value="ECO:0007669"/>
    <property type="project" value="UniProtKB-KW"/>
</dbReference>
<dbReference type="GO" id="GO:0016817">
    <property type="term" value="F:hydrolase activity, acting on acid anhydrides"/>
    <property type="evidence" value="ECO:0007669"/>
    <property type="project" value="InterPro"/>
</dbReference>
<dbReference type="GO" id="GO:0008174">
    <property type="term" value="F:mRNA methyltransferase activity"/>
    <property type="evidence" value="ECO:0007669"/>
    <property type="project" value="InterPro"/>
</dbReference>
<dbReference type="GO" id="GO:0003723">
    <property type="term" value="F:RNA binding"/>
    <property type="evidence" value="ECO:0007669"/>
    <property type="project" value="InterPro"/>
</dbReference>
<dbReference type="GO" id="GO:0032259">
    <property type="term" value="P:methylation"/>
    <property type="evidence" value="ECO:0007669"/>
    <property type="project" value="UniProtKB-KW"/>
</dbReference>
<dbReference type="GO" id="GO:0016556">
    <property type="term" value="P:mRNA modification"/>
    <property type="evidence" value="ECO:0007669"/>
    <property type="project" value="InterPro"/>
</dbReference>
<dbReference type="GO" id="GO:0006396">
    <property type="term" value="P:RNA processing"/>
    <property type="evidence" value="ECO:0007669"/>
    <property type="project" value="InterPro"/>
</dbReference>
<dbReference type="Gene3D" id="3.40.50.300">
    <property type="entry name" value="P-loop containing nucleotide triphosphate hydrolases"/>
    <property type="match status" value="2"/>
</dbReference>
<dbReference type="InterPro" id="IPR027351">
    <property type="entry name" value="(+)RNA_virus_helicase_core_dom"/>
</dbReference>
<dbReference type="InterPro" id="IPR021002">
    <property type="entry name" value="1a_necrotic_phenotyp-det_dom"/>
</dbReference>
<dbReference type="InterPro" id="IPR002588">
    <property type="entry name" value="Alphavirus-like_MT_dom"/>
</dbReference>
<dbReference type="InterPro" id="IPR022184">
    <property type="entry name" value="CMV_1a_C"/>
</dbReference>
<dbReference type="InterPro" id="IPR027417">
    <property type="entry name" value="P-loop_NTPase"/>
</dbReference>
<dbReference type="Pfam" id="PF12467">
    <property type="entry name" value="CMV_1a"/>
    <property type="match status" value="1"/>
</dbReference>
<dbReference type="Pfam" id="PF12503">
    <property type="entry name" value="CMV_1a_C"/>
    <property type="match status" value="1"/>
</dbReference>
<dbReference type="Pfam" id="PF01443">
    <property type="entry name" value="Viral_helicase1"/>
    <property type="match status" value="1"/>
</dbReference>
<dbReference type="Pfam" id="PF01660">
    <property type="entry name" value="Vmethyltransf"/>
    <property type="match status" value="1"/>
</dbReference>
<dbReference type="SUPFAM" id="SSF52540">
    <property type="entry name" value="P-loop containing nucleoside triphosphate hydrolases"/>
    <property type="match status" value="1"/>
</dbReference>
<dbReference type="PROSITE" id="PS51743">
    <property type="entry name" value="ALPHAVIRUS_MT"/>
    <property type="match status" value="1"/>
</dbReference>
<dbReference type="PROSITE" id="PS51657">
    <property type="entry name" value="PSRV_HELICASE"/>
    <property type="match status" value="1"/>
</dbReference>
<reference key="1">
    <citation type="journal article" date="1985" name="Eur. J. Biochem.">
        <title>Nucleotide sequence of cucumber mosaic virus RNA. 1. Presence of a sequence complementary to part of the viral satellite RNA and homologies with other viral RNAs.</title>
        <authorList>
            <person name="Rezaian M.A."/>
            <person name="Williams R.H.V."/>
            <person name="Symons R.H."/>
        </authorList>
    </citation>
    <scope>NUCLEOTIDE SEQUENCE [GENOMIC RNA]</scope>
</reference>
<gene>
    <name type="ORF">ORF1a</name>
</gene>
<accession>P06011</accession>
<organism>
    <name type="scientific">Cucumber mosaic virus (strain Q)</name>
    <name type="common">CMV</name>
    <dbReference type="NCBI Taxonomy" id="12310"/>
    <lineage>
        <taxon>Viruses</taxon>
        <taxon>Riboviria</taxon>
        <taxon>Orthornavirae</taxon>
        <taxon>Kitrinoviricota</taxon>
        <taxon>Alsuviricetes</taxon>
        <taxon>Martellivirales</taxon>
        <taxon>Bromoviridae</taxon>
        <taxon>Cucumovirus</taxon>
        <taxon>Cucumber mosaic virus</taxon>
    </lineage>
</organism>
<feature type="chain" id="PRO_0000083263" description="Replication protein 1a">
    <location>
        <begin position="1"/>
        <end position="991"/>
    </location>
</feature>
<feature type="domain" description="Alphavirus-like MT" evidence="3">
    <location>
        <begin position="72"/>
        <end position="290"/>
    </location>
</feature>
<feature type="domain" description="(+)RNA virus helicase ATP-binding">
    <location>
        <begin position="686"/>
        <end position="837"/>
    </location>
</feature>
<feature type="domain" description="(+)RNA virus helicase C-terminal">
    <location>
        <begin position="838"/>
        <end position="991"/>
    </location>
</feature>
<feature type="region of interest" description="Methyltransferase">
    <location>
        <begin position="52"/>
        <end position="409"/>
    </location>
</feature>
<feature type="region of interest" description="ATP-dependent helicase">
    <location>
        <begin position="711"/>
        <end position="973"/>
    </location>
</feature>
<feature type="binding site" evidence="2">
    <location>
        <begin position="713"/>
        <end position="720"/>
    </location>
    <ligand>
        <name>ATP</name>
        <dbReference type="ChEBI" id="CHEBI:30616"/>
    </ligand>
</feature>
<organismHost>
    <name type="scientific">Cucumis sativus</name>
    <name type="common">Cucumber</name>
    <dbReference type="NCBI Taxonomy" id="3659"/>
</organismHost>
<organismHost>
    <name type="scientific">Nicotiana tabacum</name>
    <name type="common">Common tobacco</name>
    <dbReference type="NCBI Taxonomy" id="4097"/>
</organismHost>
<organismHost>
    <name type="scientific">Solanum lycopersicum</name>
    <name type="common">Tomato</name>
    <name type="synonym">Lycopersicon esculentum</name>
    <dbReference type="NCBI Taxonomy" id="4081"/>
</organismHost>
<sequence>MATSSFNINELVASHGDKGLLATALVDKTAHEQLEEQLQHQRRGLKVYIRNVLDVKDSEVIRTRYGGKYDLHLAQQELAPHGLAGALRLCETLDCLDFFPRSGLRQDLVLDFGGSWVTHYLRGHNVHCCSPCLGIRDKMRHTERLMSMRKVILNDPQQFDGRQPDFCTKSAAECKVQAHFAISIHGGYDMGFRGLCEAMNAHGTTILKGTMMFDGAMMFDDQGFIPELKCQWRKIKSAFSEEEDATCSAAKLNSSVFSRVRNGKTLIAFDFVEESTMSYVHDWDNIKSFMTDQTYSFNGMTYGIERCVIYAGVMTYKIVGVPGMCPPELIRHCIWFPSMKDYVGLKIPASDDLVKWKTVRILLSTLRETEEIAMRCYNDKKNWMDLFKIILGVLSSKSSTIVINGMSMQSGERIDLNDYHYIGFAILLHTKLKYEQLGKMYDMWNASFIWKWFASMSRPFRVFFSTVVKTLFPTLRPREEKEFLVKLSTFVTFNEECSFDGGKEWDVISSAAFVATQAVADGTILAEEKAKKLADRLAVPVEEVTAIPEVSPTPVDQGTACGLETETSELDSLSAQTRSPIARIAERATAMLEYSAYEKQLHDTTVSNLQRIWCMAGGDNKRNSLESNLKFVFDTYFSVDALVNVHFPTGRWMHPVPEGVVYSVGYNEKGLGPKLDSELYIVNGDCVISNSHDLFSITKSLLAPTGTISQVDGVAGCGKTTAIKSMFNPSTDIIVTANKKSAQDVRYALFKSTDSKEACAFVRTADSILLNDCPTVSRVLVDEVVLLHFGQLCAVMSKLHAVRALCFGDSEQIAFSSRDASFDMRFSKLIPDETSDADTTFRSPQDVVPLVRLMATKALPKGTRTKYSDGAQSKVRKSVTSRAVASVSLVELDPTRFYITMTQADKASLITRAKELNLPKAFYTDRIKTVHESQGISEDHVTLVRLKSTKCDLFKKFSYCLVAVTRHKVTFRYEYCGVLGGDLIANCIPLV</sequence>
<proteinExistence type="inferred from homology"/>
<keyword id="KW-0067">ATP-binding</keyword>
<keyword id="KW-0347">Helicase</keyword>
<keyword id="KW-1038">Host endoplasmic reticulum</keyword>
<keyword id="KW-1043">Host membrane</keyword>
<keyword id="KW-0378">Hydrolase</keyword>
<keyword id="KW-0472">Membrane</keyword>
<keyword id="KW-0489">Methyltransferase</keyword>
<keyword id="KW-0547">Nucleotide-binding</keyword>
<keyword id="KW-0808">Transferase</keyword>